<proteinExistence type="inferred from homology"/>
<dbReference type="EC" id="5.3.1.9" evidence="1"/>
<dbReference type="EMBL" id="AF132127">
    <property type="protein sequence ID" value="AAD33517.1"/>
    <property type="molecule type" value="Genomic_DNA"/>
</dbReference>
<dbReference type="EMBL" id="AE014133">
    <property type="protein sequence ID" value="AAN58070.1"/>
    <property type="molecule type" value="Genomic_DNA"/>
</dbReference>
<dbReference type="PIR" id="T51720">
    <property type="entry name" value="T51720"/>
</dbReference>
<dbReference type="RefSeq" id="NP_720764.1">
    <property type="nucleotide sequence ID" value="NC_004350.2"/>
</dbReference>
<dbReference type="RefSeq" id="WP_002262911.1">
    <property type="nucleotide sequence ID" value="NC_004350.2"/>
</dbReference>
<dbReference type="SMR" id="Q9X670"/>
<dbReference type="STRING" id="210007.SMU_307"/>
<dbReference type="KEGG" id="smu:SMU_307"/>
<dbReference type="PATRIC" id="fig|210007.7.peg.266"/>
<dbReference type="eggNOG" id="COG0166">
    <property type="taxonomic scope" value="Bacteria"/>
</dbReference>
<dbReference type="HOGENOM" id="CLU_037303_0_1_9"/>
<dbReference type="OrthoDB" id="140919at2"/>
<dbReference type="PhylomeDB" id="Q9X670"/>
<dbReference type="UniPathway" id="UPA00109">
    <property type="reaction ID" value="UER00181"/>
</dbReference>
<dbReference type="UniPathway" id="UPA00138"/>
<dbReference type="Proteomes" id="UP000002512">
    <property type="component" value="Chromosome"/>
</dbReference>
<dbReference type="GO" id="GO:0005829">
    <property type="term" value="C:cytosol"/>
    <property type="evidence" value="ECO:0007669"/>
    <property type="project" value="TreeGrafter"/>
</dbReference>
<dbReference type="GO" id="GO:0097367">
    <property type="term" value="F:carbohydrate derivative binding"/>
    <property type="evidence" value="ECO:0007669"/>
    <property type="project" value="InterPro"/>
</dbReference>
<dbReference type="GO" id="GO:0004347">
    <property type="term" value="F:glucose-6-phosphate isomerase activity"/>
    <property type="evidence" value="ECO:0007669"/>
    <property type="project" value="UniProtKB-UniRule"/>
</dbReference>
<dbReference type="GO" id="GO:0048029">
    <property type="term" value="F:monosaccharide binding"/>
    <property type="evidence" value="ECO:0007669"/>
    <property type="project" value="TreeGrafter"/>
</dbReference>
<dbReference type="GO" id="GO:0006094">
    <property type="term" value="P:gluconeogenesis"/>
    <property type="evidence" value="ECO:0007669"/>
    <property type="project" value="UniProtKB-UniRule"/>
</dbReference>
<dbReference type="GO" id="GO:0051156">
    <property type="term" value="P:glucose 6-phosphate metabolic process"/>
    <property type="evidence" value="ECO:0007669"/>
    <property type="project" value="TreeGrafter"/>
</dbReference>
<dbReference type="GO" id="GO:0006096">
    <property type="term" value="P:glycolytic process"/>
    <property type="evidence" value="ECO:0007669"/>
    <property type="project" value="UniProtKB-UniRule"/>
</dbReference>
<dbReference type="CDD" id="cd05015">
    <property type="entry name" value="SIS_PGI_1"/>
    <property type="match status" value="1"/>
</dbReference>
<dbReference type="CDD" id="cd05016">
    <property type="entry name" value="SIS_PGI_2"/>
    <property type="match status" value="1"/>
</dbReference>
<dbReference type="FunFam" id="3.40.50.10490:FF:000015">
    <property type="entry name" value="Glucose-6-phosphate isomerase"/>
    <property type="match status" value="1"/>
</dbReference>
<dbReference type="FunFam" id="3.40.50.10490:FF:000016">
    <property type="entry name" value="Glucose-6-phosphate isomerase"/>
    <property type="match status" value="1"/>
</dbReference>
<dbReference type="Gene3D" id="3.40.50.10490">
    <property type="entry name" value="Glucose-6-phosphate isomerase like protein, domain 1"/>
    <property type="match status" value="3"/>
</dbReference>
<dbReference type="HAMAP" id="MF_00473">
    <property type="entry name" value="G6P_isomerase"/>
    <property type="match status" value="1"/>
</dbReference>
<dbReference type="InterPro" id="IPR001672">
    <property type="entry name" value="G6P_Isomerase"/>
</dbReference>
<dbReference type="InterPro" id="IPR018189">
    <property type="entry name" value="Phosphoglucose_isomerase_CS"/>
</dbReference>
<dbReference type="InterPro" id="IPR046348">
    <property type="entry name" value="SIS_dom_sf"/>
</dbReference>
<dbReference type="InterPro" id="IPR035476">
    <property type="entry name" value="SIS_PGI_1"/>
</dbReference>
<dbReference type="InterPro" id="IPR035482">
    <property type="entry name" value="SIS_PGI_2"/>
</dbReference>
<dbReference type="NCBIfam" id="NF010697">
    <property type="entry name" value="PRK14097.1"/>
    <property type="match status" value="1"/>
</dbReference>
<dbReference type="PANTHER" id="PTHR11469">
    <property type="entry name" value="GLUCOSE-6-PHOSPHATE ISOMERASE"/>
    <property type="match status" value="1"/>
</dbReference>
<dbReference type="PANTHER" id="PTHR11469:SF1">
    <property type="entry name" value="GLUCOSE-6-PHOSPHATE ISOMERASE"/>
    <property type="match status" value="1"/>
</dbReference>
<dbReference type="Pfam" id="PF00342">
    <property type="entry name" value="PGI"/>
    <property type="match status" value="1"/>
</dbReference>
<dbReference type="PRINTS" id="PR00662">
    <property type="entry name" value="G6PISOMERASE"/>
</dbReference>
<dbReference type="SUPFAM" id="SSF53697">
    <property type="entry name" value="SIS domain"/>
    <property type="match status" value="1"/>
</dbReference>
<dbReference type="PROSITE" id="PS00765">
    <property type="entry name" value="P_GLUCOSE_ISOMERASE_1"/>
    <property type="match status" value="1"/>
</dbReference>
<dbReference type="PROSITE" id="PS00174">
    <property type="entry name" value="P_GLUCOSE_ISOMERASE_2"/>
    <property type="match status" value="1"/>
</dbReference>
<dbReference type="PROSITE" id="PS51463">
    <property type="entry name" value="P_GLUCOSE_ISOMERASE_3"/>
    <property type="match status" value="1"/>
</dbReference>
<organism>
    <name type="scientific">Streptococcus mutans serotype c (strain ATCC 700610 / UA159)</name>
    <dbReference type="NCBI Taxonomy" id="210007"/>
    <lineage>
        <taxon>Bacteria</taxon>
        <taxon>Bacillati</taxon>
        <taxon>Bacillota</taxon>
        <taxon>Bacilli</taxon>
        <taxon>Lactobacillales</taxon>
        <taxon>Streptococcaceae</taxon>
        <taxon>Streptococcus</taxon>
    </lineage>
</organism>
<accession>Q9X670</accession>
<evidence type="ECO:0000255" key="1">
    <source>
        <dbReference type="HAMAP-Rule" id="MF_00473"/>
    </source>
</evidence>
<evidence type="ECO:0000305" key="2"/>
<protein>
    <recommendedName>
        <fullName evidence="1">Glucose-6-phosphate isomerase</fullName>
        <shortName evidence="1">GPI</shortName>
        <ecNumber evidence="1">5.3.1.9</ecNumber>
    </recommendedName>
    <alternativeName>
        <fullName evidence="1">Phosphoglucose isomerase</fullName>
        <shortName evidence="1">PGI</shortName>
    </alternativeName>
    <alternativeName>
        <fullName evidence="1">Phosphohexose isomerase</fullName>
        <shortName evidence="1">PHI</shortName>
    </alternativeName>
</protein>
<gene>
    <name evidence="1" type="primary">pgi</name>
    <name type="synonym">gpi</name>
    <name type="ordered locus">SMU_307</name>
</gene>
<comment type="function">
    <text evidence="1">Catalyzes the reversible isomerization of glucose-6-phosphate to fructose-6-phosphate.</text>
</comment>
<comment type="catalytic activity">
    <reaction evidence="1">
        <text>alpha-D-glucose 6-phosphate = beta-D-fructose 6-phosphate</text>
        <dbReference type="Rhea" id="RHEA:11816"/>
        <dbReference type="ChEBI" id="CHEBI:57634"/>
        <dbReference type="ChEBI" id="CHEBI:58225"/>
        <dbReference type="EC" id="5.3.1.9"/>
    </reaction>
</comment>
<comment type="pathway">
    <text evidence="1">Carbohydrate biosynthesis; gluconeogenesis.</text>
</comment>
<comment type="pathway">
    <text evidence="1">Carbohydrate degradation; glycolysis; D-glyceraldehyde 3-phosphate and glycerone phosphate from D-glucose: step 2/4.</text>
</comment>
<comment type="subcellular location">
    <subcellularLocation>
        <location evidence="1">Cytoplasm</location>
    </subcellularLocation>
</comment>
<comment type="similarity">
    <text evidence="1 2">Belongs to the GPI family.</text>
</comment>
<keyword id="KW-0963">Cytoplasm</keyword>
<keyword id="KW-0312">Gluconeogenesis</keyword>
<keyword id="KW-0324">Glycolysis</keyword>
<keyword id="KW-0413">Isomerase</keyword>
<keyword id="KW-1185">Reference proteome</keyword>
<reference key="1">
    <citation type="journal article" date="2000" name="Infect. Immun.">
        <title>Identification of the operon for the sorbitol (glucitol) phosphoenolpyruvate:sugar phosphotransferase system in Streptococcus mutans.</title>
        <authorList>
            <person name="Boyd D.A."/>
            <person name="Thevenot T."/>
            <person name="Gumbmann M."/>
            <person name="Honeyman A.L."/>
            <person name="Hamilton I.R."/>
        </authorList>
    </citation>
    <scope>NUCLEOTIDE SEQUENCE [GENOMIC DNA]</scope>
    <source>
        <strain>LT11</strain>
    </source>
</reference>
<reference key="2">
    <citation type="journal article" date="2002" name="Proc. Natl. Acad. Sci. U.S.A.">
        <title>Genome sequence of Streptococcus mutans UA159, a cariogenic dental pathogen.</title>
        <authorList>
            <person name="Ajdic D.J."/>
            <person name="McShan W.M."/>
            <person name="McLaughlin R.E."/>
            <person name="Savic G."/>
            <person name="Chang J."/>
            <person name="Carson M.B."/>
            <person name="Primeaux C."/>
            <person name="Tian R."/>
            <person name="Kenton S."/>
            <person name="Jia H.G."/>
            <person name="Lin S.P."/>
            <person name="Qian Y."/>
            <person name="Li S."/>
            <person name="Zhu H."/>
            <person name="Najar F.Z."/>
            <person name="Lai H."/>
            <person name="White J."/>
            <person name="Roe B.A."/>
            <person name="Ferretti J.J."/>
        </authorList>
    </citation>
    <scope>NUCLEOTIDE SEQUENCE [LARGE SCALE GENOMIC DNA]</scope>
    <source>
        <strain>ATCC 700610 / UA159</strain>
    </source>
</reference>
<feature type="chain" id="PRO_0000180737" description="Glucose-6-phosphate isomerase">
    <location>
        <begin position="1"/>
        <end position="449"/>
    </location>
</feature>
<feature type="active site" description="Proton donor" evidence="1">
    <location>
        <position position="291"/>
    </location>
</feature>
<feature type="active site" evidence="1">
    <location>
        <position position="312"/>
    </location>
</feature>
<feature type="active site" evidence="1">
    <location>
        <position position="426"/>
    </location>
</feature>
<name>G6PI_STRMU</name>
<sequence length="449" mass="49422">MTHIKFDYSKVLGKFLASHELDYIQMQVTAADEALRKGTGPGAEMTGWLNLPQNYDKEEFARIKKAAEKIKSDSEVLVVIGIGGSYLGARAAIDFLNSSFVNLENKEERKAPQILYAGNSISSNYLADLVDYVADKDFSVNVISKSGTTTEPAIAFRVFKDLLVKKYGQEEANQRIYATTDRVKGAVKVEADANGWETFVVPDSVGGRFTVLTAVGLLPIAASGADLDQLMAGAEAARQDYSSAELSENEAYQYAAIRNILYRKGYVTEVLANYEPSLQYFSEWWKQLAGESEGKDQKGIYPTSANFSTDLHSLGQFIQEGNRNLFETVIRVEKARKNILVPEAAEDLDGLAYLQGKDVDFVNKKATDGVLLAHTDGGVPNTFLTIPEQDEFTLGYVIYFFELAIGLSGYLNGVNPFDQPGVEAYKKNMFALLGKPGFEELGAELNARL</sequence>